<name>NU4LC_NICTO</name>
<keyword id="KW-0150">Chloroplast</keyword>
<keyword id="KW-0472">Membrane</keyword>
<keyword id="KW-0520">NAD</keyword>
<keyword id="KW-0521">NADP</keyword>
<keyword id="KW-0934">Plastid</keyword>
<keyword id="KW-0618">Plastoquinone</keyword>
<keyword id="KW-0874">Quinone</keyword>
<keyword id="KW-0793">Thylakoid</keyword>
<keyword id="KW-1278">Translocase</keyword>
<keyword id="KW-0812">Transmembrane</keyword>
<keyword id="KW-1133">Transmembrane helix</keyword>
<keyword id="KW-0813">Transport</keyword>
<organism>
    <name type="scientific">Nicotiana tomentosiformis</name>
    <name type="common">Tobacco</name>
    <dbReference type="NCBI Taxonomy" id="4098"/>
    <lineage>
        <taxon>Eukaryota</taxon>
        <taxon>Viridiplantae</taxon>
        <taxon>Streptophyta</taxon>
        <taxon>Embryophyta</taxon>
        <taxon>Tracheophyta</taxon>
        <taxon>Spermatophyta</taxon>
        <taxon>Magnoliopsida</taxon>
        <taxon>eudicotyledons</taxon>
        <taxon>Gunneridae</taxon>
        <taxon>Pentapetalae</taxon>
        <taxon>asterids</taxon>
        <taxon>lamiids</taxon>
        <taxon>Solanales</taxon>
        <taxon>Solanaceae</taxon>
        <taxon>Nicotianoideae</taxon>
        <taxon>Nicotianeae</taxon>
        <taxon>Nicotiana</taxon>
    </lineage>
</organism>
<reference key="1">
    <citation type="journal article" date="2006" name="Mol. Genet. Genomics">
        <title>The chloroplast genome of Nicotiana sylvestris and Nicotiana tomentosiformis: complete sequencing confirms that the Nicotiana sylvestris progenitor is the maternal genome donor of Nicotiana tabacum.</title>
        <authorList>
            <person name="Yukawa M."/>
            <person name="Tsudzuki T."/>
            <person name="Sugiura M."/>
        </authorList>
    </citation>
    <scope>NUCLEOTIDE SEQUENCE [LARGE SCALE GENOMIC DNA]</scope>
</reference>
<feature type="chain" id="PRO_0000360349" description="NAD(P)H-quinone oxidoreductase subunit 4L, chloroplastic">
    <location>
        <begin position="1"/>
        <end position="101"/>
    </location>
</feature>
<feature type="transmembrane region" description="Helical" evidence="1">
    <location>
        <begin position="2"/>
        <end position="22"/>
    </location>
</feature>
<feature type="transmembrane region" description="Helical" evidence="1">
    <location>
        <begin position="32"/>
        <end position="52"/>
    </location>
</feature>
<feature type="transmembrane region" description="Helical" evidence="1">
    <location>
        <begin position="61"/>
        <end position="81"/>
    </location>
</feature>
<comment type="function">
    <text evidence="1">NDH shuttles electrons from NAD(P)H:plastoquinone, via FMN and iron-sulfur (Fe-S) centers, to quinones in the photosynthetic chain and possibly in a chloroplast respiratory chain. The immediate electron acceptor for the enzyme in this species is believed to be plastoquinone. Couples the redox reaction to proton translocation, and thus conserves the redox energy in a proton gradient.</text>
</comment>
<comment type="catalytic activity">
    <reaction evidence="1">
        <text>a plastoquinone + NADH + (n+1) H(+)(in) = a plastoquinol + NAD(+) + n H(+)(out)</text>
        <dbReference type="Rhea" id="RHEA:42608"/>
        <dbReference type="Rhea" id="RHEA-COMP:9561"/>
        <dbReference type="Rhea" id="RHEA-COMP:9562"/>
        <dbReference type="ChEBI" id="CHEBI:15378"/>
        <dbReference type="ChEBI" id="CHEBI:17757"/>
        <dbReference type="ChEBI" id="CHEBI:57540"/>
        <dbReference type="ChEBI" id="CHEBI:57945"/>
        <dbReference type="ChEBI" id="CHEBI:62192"/>
    </reaction>
</comment>
<comment type="catalytic activity">
    <reaction evidence="1">
        <text>a plastoquinone + NADPH + (n+1) H(+)(in) = a plastoquinol + NADP(+) + n H(+)(out)</text>
        <dbReference type="Rhea" id="RHEA:42612"/>
        <dbReference type="Rhea" id="RHEA-COMP:9561"/>
        <dbReference type="Rhea" id="RHEA-COMP:9562"/>
        <dbReference type="ChEBI" id="CHEBI:15378"/>
        <dbReference type="ChEBI" id="CHEBI:17757"/>
        <dbReference type="ChEBI" id="CHEBI:57783"/>
        <dbReference type="ChEBI" id="CHEBI:58349"/>
        <dbReference type="ChEBI" id="CHEBI:62192"/>
    </reaction>
</comment>
<comment type="subunit">
    <text evidence="1">NDH is composed of at least 16 different subunits, 5 of which are encoded in the nucleus.</text>
</comment>
<comment type="subcellular location">
    <subcellularLocation>
        <location evidence="1">Plastid</location>
        <location evidence="1">Chloroplast thylakoid membrane</location>
        <topology evidence="1">Multi-pass membrane protein</topology>
    </subcellularLocation>
</comment>
<comment type="similarity">
    <text evidence="1">Belongs to the complex I subunit 4L family.</text>
</comment>
<dbReference type="EC" id="7.1.1.-" evidence="1"/>
<dbReference type="EMBL" id="AB240139">
    <property type="protein sequence ID" value="BAE48065.1"/>
    <property type="molecule type" value="Genomic_DNA"/>
</dbReference>
<dbReference type="RefSeq" id="YP_398925.1">
    <property type="nucleotide sequence ID" value="NC_007602.1"/>
</dbReference>
<dbReference type="SMR" id="Q33BX0"/>
<dbReference type="GeneID" id="3776351"/>
<dbReference type="KEGG" id="nto:3776351"/>
<dbReference type="OrthoDB" id="1925110at2759"/>
<dbReference type="GO" id="GO:0009535">
    <property type="term" value="C:chloroplast thylakoid membrane"/>
    <property type="evidence" value="ECO:0007669"/>
    <property type="project" value="UniProtKB-SubCell"/>
</dbReference>
<dbReference type="GO" id="GO:0030964">
    <property type="term" value="C:NADH dehydrogenase complex"/>
    <property type="evidence" value="ECO:0007669"/>
    <property type="project" value="TreeGrafter"/>
</dbReference>
<dbReference type="GO" id="GO:0016655">
    <property type="term" value="F:oxidoreductase activity, acting on NAD(P)H, quinone or similar compound as acceptor"/>
    <property type="evidence" value="ECO:0007669"/>
    <property type="project" value="UniProtKB-UniRule"/>
</dbReference>
<dbReference type="GO" id="GO:0048038">
    <property type="term" value="F:quinone binding"/>
    <property type="evidence" value="ECO:0007669"/>
    <property type="project" value="UniProtKB-KW"/>
</dbReference>
<dbReference type="GO" id="GO:0042773">
    <property type="term" value="P:ATP synthesis coupled electron transport"/>
    <property type="evidence" value="ECO:0007669"/>
    <property type="project" value="InterPro"/>
</dbReference>
<dbReference type="GO" id="GO:0019684">
    <property type="term" value="P:photosynthesis, light reaction"/>
    <property type="evidence" value="ECO:0007669"/>
    <property type="project" value="UniProtKB-UniRule"/>
</dbReference>
<dbReference type="FunFam" id="1.10.287.3510:FF:000001">
    <property type="entry name" value="NADH-quinone oxidoreductase subunit K"/>
    <property type="match status" value="1"/>
</dbReference>
<dbReference type="Gene3D" id="1.10.287.3510">
    <property type="match status" value="1"/>
</dbReference>
<dbReference type="HAMAP" id="MF_01456">
    <property type="entry name" value="NDH1_NuoK"/>
    <property type="match status" value="1"/>
</dbReference>
<dbReference type="InterPro" id="IPR001133">
    <property type="entry name" value="NADH_UbQ_OxRdtase_chain4L/K"/>
</dbReference>
<dbReference type="InterPro" id="IPR039428">
    <property type="entry name" value="NUOK/Mnh_C1-like"/>
</dbReference>
<dbReference type="NCBIfam" id="NF004320">
    <property type="entry name" value="PRK05715.1-2"/>
    <property type="match status" value="1"/>
</dbReference>
<dbReference type="NCBIfam" id="NF004322">
    <property type="entry name" value="PRK05715.1-4"/>
    <property type="match status" value="1"/>
</dbReference>
<dbReference type="NCBIfam" id="NF004323">
    <property type="entry name" value="PRK05715.1-5"/>
    <property type="match status" value="1"/>
</dbReference>
<dbReference type="PANTHER" id="PTHR11434:SF16">
    <property type="entry name" value="NADH-UBIQUINONE OXIDOREDUCTASE CHAIN 4L"/>
    <property type="match status" value="1"/>
</dbReference>
<dbReference type="PANTHER" id="PTHR11434">
    <property type="entry name" value="NADH-UBIQUINONE OXIDOREDUCTASE SUBUNIT ND4L"/>
    <property type="match status" value="1"/>
</dbReference>
<dbReference type="Pfam" id="PF00420">
    <property type="entry name" value="Oxidored_q2"/>
    <property type="match status" value="1"/>
</dbReference>
<evidence type="ECO:0000255" key="1">
    <source>
        <dbReference type="HAMAP-Rule" id="MF_01456"/>
    </source>
</evidence>
<proteinExistence type="inferred from homology"/>
<gene>
    <name evidence="1" type="primary">ndhE</name>
</gene>
<sequence length="101" mass="11270">MILEHVLVLSAYLFSIGIYGLITSRNMVRALMCLELILNAVNINFVTFSDFFDNRQLKGDIFSIFVIAIAAAEAAIGLAIVSSIYRNRKSTRINQSNLLNN</sequence>
<accession>Q33BX0</accession>
<geneLocation type="chloroplast"/>
<protein>
    <recommendedName>
        <fullName evidence="1">NAD(P)H-quinone oxidoreductase subunit 4L, chloroplastic</fullName>
        <ecNumber evidence="1">7.1.1.-</ecNumber>
    </recommendedName>
    <alternativeName>
        <fullName evidence="1">NAD(P)H dehydrogenase subunit 4L</fullName>
    </alternativeName>
    <alternativeName>
        <fullName evidence="1">NADH-plastoquinone oxidoreductase subunit 4L</fullName>
    </alternativeName>
</protein>